<accession>Q9PY94</accession>
<proteinExistence type="inferred from homology"/>
<dbReference type="EMBL" id="AJ132204">
    <property type="protein sequence ID" value="CAB52752.1"/>
    <property type="molecule type" value="Genomic_RNA"/>
</dbReference>
<dbReference type="RefSeq" id="YP_392487.1">
    <property type="nucleotide sequence ID" value="NC_007544.1"/>
</dbReference>
<dbReference type="GeneID" id="3773134"/>
<dbReference type="KEGG" id="vg:3773134"/>
<dbReference type="Proteomes" id="UP000007664">
    <property type="component" value="Genome"/>
</dbReference>
<dbReference type="GO" id="GO:0030430">
    <property type="term" value="C:host cell cytoplasm"/>
    <property type="evidence" value="ECO:0007669"/>
    <property type="project" value="UniProtKB-UniRule"/>
</dbReference>
<dbReference type="GO" id="GO:0044163">
    <property type="term" value="C:host cytoskeleton"/>
    <property type="evidence" value="ECO:0007669"/>
    <property type="project" value="UniProtKB-SubCell"/>
</dbReference>
<dbReference type="GO" id="GO:0046872">
    <property type="term" value="F:metal ion binding"/>
    <property type="evidence" value="ECO:0007669"/>
    <property type="project" value="UniProtKB-UniRule"/>
</dbReference>
<dbReference type="GO" id="GO:0003723">
    <property type="term" value="F:RNA binding"/>
    <property type="evidence" value="ECO:0007669"/>
    <property type="project" value="UniProtKB-UniRule"/>
</dbReference>
<dbReference type="GO" id="GO:0039548">
    <property type="term" value="P:symbiont-mediated suppression of host cytoplasmic pattern recognition receptor signaling pathway via inhibition of IRF3 activity"/>
    <property type="evidence" value="ECO:0007669"/>
    <property type="project" value="UniProtKB-UniRule"/>
</dbReference>
<dbReference type="GO" id="GO:0039557">
    <property type="term" value="P:symbiont-mediated suppression of host cytoplasmic pattern recognition receptor signaling pathway via inhibition of IRF7 activity"/>
    <property type="evidence" value="ECO:0007669"/>
    <property type="project" value="UniProtKB-UniRule"/>
</dbReference>
<dbReference type="HAMAP" id="MF_04088">
    <property type="entry name" value="ROTA_NSP1"/>
    <property type="match status" value="1"/>
</dbReference>
<dbReference type="InterPro" id="IPR002148">
    <property type="entry name" value="Rotavirus_NSP1"/>
</dbReference>
<dbReference type="Pfam" id="PF00981">
    <property type="entry name" value="Rota_NS53"/>
    <property type="match status" value="1"/>
</dbReference>
<reference key="1">
    <citation type="journal article" date="1999" name="J. Gen. Virol.">
        <title>Molecular characterization of human group C rotavirus genes 6, 7 and 9.</title>
        <authorList>
            <person name="James V.L."/>
            <person name="Lambden P.R."/>
            <person name="Deng Y."/>
            <person name="Caul E.O."/>
            <person name="Clarke I.N."/>
        </authorList>
    </citation>
    <scope>NUCLEOTIDE SEQUENCE [GENOMIC RNA]</scope>
</reference>
<organism>
    <name type="scientific">Rotavirus C (isolate RVC/Human/United Kingdom/Bristol/1989)</name>
    <name type="common">RV-C</name>
    <dbReference type="NCBI Taxonomy" id="31567"/>
    <lineage>
        <taxon>Viruses</taxon>
        <taxon>Riboviria</taxon>
        <taxon>Orthornavirae</taxon>
        <taxon>Duplornaviricota</taxon>
        <taxon>Resentoviricetes</taxon>
        <taxon>Reovirales</taxon>
        <taxon>Sedoreoviridae</taxon>
        <taxon>Rotavirus</taxon>
        <taxon>Rotavirus C</taxon>
    </lineage>
</organism>
<sequence>MANSFREMLYWYRKIIDRKLPCVNVNIWRREIAYKANGICLNCLNECKVCPCDYCGIRHKCENCLNSDCFMNTNNEFNSHRWITFDEEPSQMVLFEYWIMYKDYFLSKFNYNYKAQLKILNMNKNRRFHINESKKKALSVPITSQYLKFKFNNKIYIMFGTFLTSKIQPWIQLKSLKVGYIQSLNVDRCAKLIATKGMFATNSFKSSCITEINARRPISECDYLIEACLCNENNEWKFSAVMGRDKIPVTKSLAMKYFCKNINTELFYYGHSKCHVVSECPRWNQQLRVLNASTLNIIFRRQFMNEVVEWFENFTQLTGMHYDFIKTCVYNKVIISHFRKEIEDYINSGKKISLSSVIPDGHALYTNIDILRISLMLAIDVALNRIESQQMDVL</sequence>
<evidence type="ECO:0000255" key="1">
    <source>
        <dbReference type="HAMAP-Rule" id="MF_04088"/>
    </source>
</evidence>
<keyword id="KW-1035">Host cytoplasm</keyword>
<keyword id="KW-1037">Host cytoskeleton</keyword>
<keyword id="KW-0945">Host-virus interaction</keyword>
<keyword id="KW-1090">Inhibition of host innate immune response by virus</keyword>
<keyword id="KW-1092">Inhibition of host IRF3 by virus</keyword>
<keyword id="KW-1093">Inhibition of host IRF7 by virus</keyword>
<keyword id="KW-1113">Inhibition of host RLR pathway by virus</keyword>
<keyword id="KW-0922">Interferon antiviral system evasion</keyword>
<keyword id="KW-0479">Metal-binding</keyword>
<keyword id="KW-1185">Reference proteome</keyword>
<keyword id="KW-0694">RNA-binding</keyword>
<keyword id="KW-0899">Viral immunoevasion</keyword>
<protein>
    <recommendedName>
        <fullName evidence="1">Non-structural protein 1</fullName>
        <shortName evidence="1">NSP1</shortName>
    </recommendedName>
    <alternativeName>
        <fullName evidence="1">NCVP2</fullName>
    </alternativeName>
    <alternativeName>
        <fullName evidence="1">Non-structural RNA-binding protein 53</fullName>
        <shortName evidence="1">NS53</shortName>
    </alternativeName>
</protein>
<comment type="function">
    <text evidence="1">Plays a role in the inhibition of host innate immunity by inducing the degradation of key host factors required to activate interferon production such as IRF3, IRF5 or IRF7. Associates with components of cullin RING ligases (CRLs) including CUL1 or CUL3, which are essential multisubunit ubiquitination complexes, to modulate their activities.</text>
</comment>
<comment type="subunit">
    <text evidence="1">Interacts (via C-terminus) with host IRF3; this interaction leads to IRF3 degradation. Interacts with host IRF7; this interaction leads to IRF7 degradation. Interacts with host CUL1 and CUL3.</text>
</comment>
<comment type="subcellular location">
    <subcellularLocation>
        <location evidence="1">Host cytoplasm</location>
        <location evidence="1">Host cytoskeleton</location>
    </subcellularLocation>
</comment>
<comment type="domain">
    <text evidence="1">The integrity of the zinc-binding domain in NSP1 is important for degradation of host IRF3.</text>
</comment>
<comment type="similarity">
    <text evidence="1">Belongs to the rotavirus NSP1 family.</text>
</comment>
<organismHost>
    <name type="scientific">Homo sapiens</name>
    <name type="common">Human</name>
    <dbReference type="NCBI Taxonomy" id="9606"/>
</organismHost>
<feature type="chain" id="PRO_0000369881" description="Non-structural protein 1">
    <location>
        <begin position="1"/>
        <end position="394"/>
    </location>
</feature>
<feature type="region of interest" description="RNA-binding" evidence="1">
    <location>
        <begin position="2"/>
        <end position="80"/>
    </location>
</feature>
<feature type="region of interest" description="Zinc-binding domain" evidence="1">
    <location>
        <begin position="40"/>
        <end position="78"/>
    </location>
</feature>
<feature type="region of interest" description="Important for cytoskeleton localization" evidence="1">
    <location>
        <begin position="81"/>
        <end position="171"/>
    </location>
</feature>
<feature type="region of interest" description="Interaction with host IRF3" evidence="1">
    <location>
        <begin position="268"/>
        <end position="394"/>
    </location>
</feature>
<name>NSP1_ROTHC</name>